<gene>
    <name evidence="1" type="primary">rpsT</name>
    <name type="ordered locus">cu1355</name>
</gene>
<accession>B1VGK8</accession>
<sequence length="87" mass="9898">MANIKQTKKRVLTNEIARQRNKAVRSRLRTESRKFHALVEAGDKDAAEKQMRVAARLYDKAVTKGVLHRNNAANKKSRMAAHLNGMK</sequence>
<comment type="function">
    <text evidence="1">Binds directly to 16S ribosomal RNA.</text>
</comment>
<comment type="similarity">
    <text evidence="1">Belongs to the bacterial ribosomal protein bS20 family.</text>
</comment>
<organism>
    <name type="scientific">Corynebacterium urealyticum (strain ATCC 43042 / DSM 7109)</name>
    <dbReference type="NCBI Taxonomy" id="504474"/>
    <lineage>
        <taxon>Bacteria</taxon>
        <taxon>Bacillati</taxon>
        <taxon>Actinomycetota</taxon>
        <taxon>Actinomycetes</taxon>
        <taxon>Mycobacteriales</taxon>
        <taxon>Corynebacteriaceae</taxon>
        <taxon>Corynebacterium</taxon>
    </lineage>
</organism>
<evidence type="ECO:0000255" key="1">
    <source>
        <dbReference type="HAMAP-Rule" id="MF_00500"/>
    </source>
</evidence>
<evidence type="ECO:0000305" key="2"/>
<reference key="1">
    <citation type="journal article" date="2008" name="J. Biotechnol.">
        <title>The lifestyle of Corynebacterium urealyticum derived from its complete genome sequence established by pyrosequencing.</title>
        <authorList>
            <person name="Tauch A."/>
            <person name="Trost E."/>
            <person name="Tilker A."/>
            <person name="Ludewig U."/>
            <person name="Schneiker S."/>
            <person name="Goesmann A."/>
            <person name="Arnold W."/>
            <person name="Bekel T."/>
            <person name="Brinkrolf K."/>
            <person name="Brune I."/>
            <person name="Goetker S."/>
            <person name="Kalinowski J."/>
            <person name="Kamp P.-B."/>
            <person name="Lobo F.P."/>
            <person name="Viehoever P."/>
            <person name="Weisshaar B."/>
            <person name="Soriano F."/>
            <person name="Droege M."/>
            <person name="Puehler A."/>
        </authorList>
    </citation>
    <scope>NUCLEOTIDE SEQUENCE [LARGE SCALE GENOMIC DNA]</scope>
    <source>
        <strain>ATCC 43042 / DSM 7109</strain>
    </source>
</reference>
<feature type="chain" id="PRO_1000126427" description="Small ribosomal subunit protein bS20">
    <location>
        <begin position="1"/>
        <end position="87"/>
    </location>
</feature>
<proteinExistence type="inferred from homology"/>
<name>RS20_CORU7</name>
<protein>
    <recommendedName>
        <fullName evidence="1">Small ribosomal subunit protein bS20</fullName>
    </recommendedName>
    <alternativeName>
        <fullName evidence="2">30S ribosomal protein S20</fullName>
    </alternativeName>
</protein>
<dbReference type="EMBL" id="AM942444">
    <property type="protein sequence ID" value="CAQ05315.1"/>
    <property type="molecule type" value="Genomic_DNA"/>
</dbReference>
<dbReference type="RefSeq" id="WP_012360603.1">
    <property type="nucleotide sequence ID" value="NC_010545.1"/>
</dbReference>
<dbReference type="SMR" id="B1VGK8"/>
<dbReference type="STRING" id="504474.cu1355"/>
<dbReference type="GeneID" id="60604135"/>
<dbReference type="KEGG" id="cur:cu1355"/>
<dbReference type="eggNOG" id="COG0268">
    <property type="taxonomic scope" value="Bacteria"/>
</dbReference>
<dbReference type="HOGENOM" id="CLU_160655_0_1_11"/>
<dbReference type="Proteomes" id="UP000001727">
    <property type="component" value="Chromosome"/>
</dbReference>
<dbReference type="GO" id="GO:0005829">
    <property type="term" value="C:cytosol"/>
    <property type="evidence" value="ECO:0007669"/>
    <property type="project" value="TreeGrafter"/>
</dbReference>
<dbReference type="GO" id="GO:0015935">
    <property type="term" value="C:small ribosomal subunit"/>
    <property type="evidence" value="ECO:0007669"/>
    <property type="project" value="TreeGrafter"/>
</dbReference>
<dbReference type="GO" id="GO:0070181">
    <property type="term" value="F:small ribosomal subunit rRNA binding"/>
    <property type="evidence" value="ECO:0007669"/>
    <property type="project" value="TreeGrafter"/>
</dbReference>
<dbReference type="GO" id="GO:0003735">
    <property type="term" value="F:structural constituent of ribosome"/>
    <property type="evidence" value="ECO:0007669"/>
    <property type="project" value="InterPro"/>
</dbReference>
<dbReference type="GO" id="GO:0006412">
    <property type="term" value="P:translation"/>
    <property type="evidence" value="ECO:0007669"/>
    <property type="project" value="UniProtKB-UniRule"/>
</dbReference>
<dbReference type="FunFam" id="1.20.58.110:FF:000001">
    <property type="entry name" value="30S ribosomal protein S20"/>
    <property type="match status" value="1"/>
</dbReference>
<dbReference type="Gene3D" id="1.20.58.110">
    <property type="entry name" value="Ribosomal protein S20"/>
    <property type="match status" value="1"/>
</dbReference>
<dbReference type="HAMAP" id="MF_00500">
    <property type="entry name" value="Ribosomal_bS20"/>
    <property type="match status" value="1"/>
</dbReference>
<dbReference type="InterPro" id="IPR002583">
    <property type="entry name" value="Ribosomal_bS20"/>
</dbReference>
<dbReference type="InterPro" id="IPR036510">
    <property type="entry name" value="Ribosomal_bS20_sf"/>
</dbReference>
<dbReference type="NCBIfam" id="TIGR00029">
    <property type="entry name" value="S20"/>
    <property type="match status" value="1"/>
</dbReference>
<dbReference type="PANTHER" id="PTHR33398">
    <property type="entry name" value="30S RIBOSOMAL PROTEIN S20"/>
    <property type="match status" value="1"/>
</dbReference>
<dbReference type="PANTHER" id="PTHR33398:SF1">
    <property type="entry name" value="SMALL RIBOSOMAL SUBUNIT PROTEIN BS20C"/>
    <property type="match status" value="1"/>
</dbReference>
<dbReference type="Pfam" id="PF01649">
    <property type="entry name" value="Ribosomal_S20p"/>
    <property type="match status" value="1"/>
</dbReference>
<dbReference type="SUPFAM" id="SSF46992">
    <property type="entry name" value="Ribosomal protein S20"/>
    <property type="match status" value="1"/>
</dbReference>
<keyword id="KW-1185">Reference proteome</keyword>
<keyword id="KW-0687">Ribonucleoprotein</keyword>
<keyword id="KW-0689">Ribosomal protein</keyword>
<keyword id="KW-0694">RNA-binding</keyword>
<keyword id="KW-0699">rRNA-binding</keyword>